<accession>Q9KZK8</accession>
<keyword id="KW-0342">GTP-binding</keyword>
<keyword id="KW-0436">Ligase</keyword>
<keyword id="KW-0460">Magnesium</keyword>
<keyword id="KW-0464">Manganese</keyword>
<keyword id="KW-0479">Metal-binding</keyword>
<keyword id="KW-0511">Multifunctional enzyme</keyword>
<keyword id="KW-0547">Nucleotide-binding</keyword>
<keyword id="KW-0560">Oxidoreductase</keyword>
<keyword id="KW-0630">Potassium</keyword>
<keyword id="KW-1185">Reference proteome</keyword>
<feature type="chain" id="PRO_0000145784" description="Bifunctional F420 biosynthesis protein FbiB">
    <location>
        <begin position="1"/>
        <end position="443"/>
    </location>
</feature>
<feature type="region of interest" description="Coenzyme F420:L-glutamate ligase" evidence="1">
    <location>
        <begin position="1"/>
        <end position="243"/>
    </location>
</feature>
<feature type="region of interest" description="Dehydro-coenzyme F420-0 reductase" evidence="1">
    <location>
        <begin position="244"/>
        <end position="443"/>
    </location>
</feature>
<feature type="binding site" evidence="1">
    <location>
        <begin position="24"/>
        <end position="27"/>
    </location>
    <ligand>
        <name>GTP</name>
        <dbReference type="ChEBI" id="CHEBI:37565"/>
    </ligand>
</feature>
<feature type="binding site" evidence="1">
    <location>
        <position position="54"/>
    </location>
    <ligand>
        <name>GTP</name>
        <dbReference type="ChEBI" id="CHEBI:37565"/>
    </ligand>
</feature>
<feature type="binding site" evidence="1">
    <location>
        <position position="59"/>
    </location>
    <ligand>
        <name>GTP</name>
        <dbReference type="ChEBI" id="CHEBI:37565"/>
    </ligand>
</feature>
<feature type="binding site" evidence="1">
    <location>
        <position position="105"/>
    </location>
    <ligand>
        <name>a divalent metal cation</name>
        <dbReference type="ChEBI" id="CHEBI:60240"/>
        <label>1</label>
    </ligand>
</feature>
<feature type="binding site" evidence="1">
    <location>
        <position position="108"/>
    </location>
    <ligand>
        <name>GTP</name>
        <dbReference type="ChEBI" id="CHEBI:37565"/>
    </ligand>
</feature>
<feature type="binding site" evidence="1">
    <location>
        <position position="146"/>
    </location>
    <ligand>
        <name>a divalent metal cation</name>
        <dbReference type="ChEBI" id="CHEBI:60240"/>
        <label>1</label>
    </ligand>
</feature>
<feature type="binding site" evidence="1">
    <location>
        <position position="147"/>
    </location>
    <ligand>
        <name>a divalent metal cation</name>
        <dbReference type="ChEBI" id="CHEBI:60240"/>
        <label>2</label>
    </ligand>
</feature>
<feature type="binding site" evidence="1">
    <location>
        <position position="283"/>
    </location>
    <ligand>
        <name>FMN</name>
        <dbReference type="ChEBI" id="CHEBI:58210"/>
    </ligand>
</feature>
<feature type="binding site" evidence="1">
    <location>
        <position position="315"/>
    </location>
    <ligand>
        <name>coenzyme F420-(gamma-Glu)n</name>
        <dbReference type="ChEBI" id="CHEBI:133980"/>
    </ligand>
</feature>
<feature type="binding site" evidence="1">
    <location>
        <position position="394"/>
    </location>
    <ligand>
        <name>FMN</name>
        <dbReference type="ChEBI" id="CHEBI:58210"/>
    </ligand>
</feature>
<feature type="binding site" evidence="1">
    <location>
        <position position="431"/>
    </location>
    <ligand>
        <name>FMN</name>
        <dbReference type="ChEBI" id="CHEBI:58210"/>
    </ligand>
</feature>
<gene>
    <name evidence="1" type="primary">fbiB</name>
    <name type="ordered locus">SCO3037</name>
    <name type="ORF">SCE34.18</name>
</gene>
<evidence type="ECO:0000255" key="1">
    <source>
        <dbReference type="HAMAP-Rule" id="MF_01259"/>
    </source>
</evidence>
<sequence>MSDETRDAAPGRRDGYRVWALPGLPEVQSGDDLAKLIAAAEPALADGDVLLVTSKIVSKAEGRVVEAADREAAIDAETVRVVARRGPLRIVENRQGLVMAAAGVDASNTPAGTVLLLPEDPDASARGIREGLRDTLGVDVGVIVTDTFGRPWRAGLTDVAIGAAGVRVLDDLRGGTDAYGNPLGATVVATADELAAAGDLVKGKAAGLPVAVLRGLPQVVAEDDGEGARAMVRGARDDMFRLGTSEAVRQAVTQRRTVRAFTDEPVDPGAVRRAVAAAVTAPAPHHTTPWRFVLLESGESRTRLLDAMRDAWIADLRRDGKSEESVAKRVRRGDVLRNAPYLVVPCLVMDGSHTYGDVRRDAAEREMFVVATGAGVQNLLVALAGERLGSAWVSSTMFCRDVVREVLGLPDGWDPMGAVAVGHPAEEPKARPERDAEAFIEVR</sequence>
<protein>
    <recommendedName>
        <fullName evidence="1">Bifunctional F420 biosynthesis protein FbiB</fullName>
    </recommendedName>
    <domain>
        <recommendedName>
            <fullName evidence="1">Coenzyme F420:L-glutamate ligase</fullName>
            <ecNumber evidence="1">6.3.2.31</ecNumber>
            <ecNumber evidence="1">6.3.2.34</ecNumber>
        </recommendedName>
        <alternativeName>
            <fullName evidence="1">Coenzyme F420-0:L-glutamate ligase</fullName>
        </alternativeName>
        <alternativeName>
            <fullName evidence="1">Coenzyme F420-1:gamma-L-glutamate ligase</fullName>
        </alternativeName>
    </domain>
    <domain>
        <recommendedName>
            <fullName evidence="1">Dehydro-coenzyme F420-0 reductase</fullName>
            <ecNumber evidence="1">1.3.8.17</ecNumber>
        </recommendedName>
    </domain>
</protein>
<reference key="1">
    <citation type="journal article" date="2002" name="Nature">
        <title>Complete genome sequence of the model actinomycete Streptomyces coelicolor A3(2).</title>
        <authorList>
            <person name="Bentley S.D."/>
            <person name="Chater K.F."/>
            <person name="Cerdeno-Tarraga A.-M."/>
            <person name="Challis G.L."/>
            <person name="Thomson N.R."/>
            <person name="James K.D."/>
            <person name="Harris D.E."/>
            <person name="Quail M.A."/>
            <person name="Kieser H."/>
            <person name="Harper D."/>
            <person name="Bateman A."/>
            <person name="Brown S."/>
            <person name="Chandra G."/>
            <person name="Chen C.W."/>
            <person name="Collins M."/>
            <person name="Cronin A."/>
            <person name="Fraser A."/>
            <person name="Goble A."/>
            <person name="Hidalgo J."/>
            <person name="Hornsby T."/>
            <person name="Howarth S."/>
            <person name="Huang C.-H."/>
            <person name="Kieser T."/>
            <person name="Larke L."/>
            <person name="Murphy L.D."/>
            <person name="Oliver K."/>
            <person name="O'Neil S."/>
            <person name="Rabbinowitsch E."/>
            <person name="Rajandream M.A."/>
            <person name="Rutherford K.M."/>
            <person name="Rutter S."/>
            <person name="Seeger K."/>
            <person name="Saunders D."/>
            <person name="Sharp S."/>
            <person name="Squares R."/>
            <person name="Squares S."/>
            <person name="Taylor K."/>
            <person name="Warren T."/>
            <person name="Wietzorrek A."/>
            <person name="Woodward J.R."/>
            <person name="Barrell B.G."/>
            <person name="Parkhill J."/>
            <person name="Hopwood D.A."/>
        </authorList>
    </citation>
    <scope>NUCLEOTIDE SEQUENCE [LARGE SCALE GENOMIC DNA]</scope>
    <source>
        <strain>ATCC BAA-471 / A3(2) / M145</strain>
    </source>
</reference>
<dbReference type="EC" id="6.3.2.31" evidence="1"/>
<dbReference type="EC" id="6.3.2.34" evidence="1"/>
<dbReference type="EC" id="1.3.8.17" evidence="1"/>
<dbReference type="EMBL" id="AL939114">
    <property type="protein sequence ID" value="CAB88921.1"/>
    <property type="molecule type" value="Genomic_DNA"/>
</dbReference>
<dbReference type="RefSeq" id="NP_627259.1">
    <property type="nucleotide sequence ID" value="NC_003888.3"/>
</dbReference>
<dbReference type="RefSeq" id="WP_011028727.1">
    <property type="nucleotide sequence ID" value="NZ_VNID01000013.1"/>
</dbReference>
<dbReference type="SMR" id="Q9KZK8"/>
<dbReference type="FunCoup" id="Q9KZK8">
    <property type="interactions" value="1"/>
</dbReference>
<dbReference type="STRING" id="100226.gene:17760652"/>
<dbReference type="PaxDb" id="100226-SCO3037"/>
<dbReference type="KEGG" id="sco:SCO3037"/>
<dbReference type="PATRIC" id="fig|100226.15.peg.3097"/>
<dbReference type="eggNOG" id="COG0778">
    <property type="taxonomic scope" value="Bacteria"/>
</dbReference>
<dbReference type="eggNOG" id="COG1478">
    <property type="taxonomic scope" value="Bacteria"/>
</dbReference>
<dbReference type="HOGENOM" id="CLU_051152_0_0_11"/>
<dbReference type="InParanoid" id="Q9KZK8"/>
<dbReference type="OrthoDB" id="9788295at2"/>
<dbReference type="PhylomeDB" id="Q9KZK8"/>
<dbReference type="UniPathway" id="UPA00071"/>
<dbReference type="Proteomes" id="UP000001973">
    <property type="component" value="Chromosome"/>
</dbReference>
<dbReference type="GO" id="GO:0052618">
    <property type="term" value="F:coenzyme F420-0:L-glutamate ligase activity"/>
    <property type="evidence" value="ECO:0000318"/>
    <property type="project" value="GO_Central"/>
</dbReference>
<dbReference type="GO" id="GO:0052619">
    <property type="term" value="F:coenzyme F420-1:gamma-L-glutamate ligase activity"/>
    <property type="evidence" value="ECO:0007669"/>
    <property type="project" value="UniProtKB-UniRule"/>
</dbReference>
<dbReference type="GO" id="GO:0005525">
    <property type="term" value="F:GTP binding"/>
    <property type="evidence" value="ECO:0007669"/>
    <property type="project" value="UniProtKB-KW"/>
</dbReference>
<dbReference type="GO" id="GO:0046872">
    <property type="term" value="F:metal ion binding"/>
    <property type="evidence" value="ECO:0007669"/>
    <property type="project" value="UniProtKB-KW"/>
</dbReference>
<dbReference type="GO" id="GO:0052890">
    <property type="term" value="F:oxidoreductase activity, acting on the CH-CH group of donors, with a flavin as acceptor"/>
    <property type="evidence" value="ECO:0007669"/>
    <property type="project" value="UniProtKB-UniRule"/>
</dbReference>
<dbReference type="GO" id="GO:0052645">
    <property type="term" value="P:F420-0 metabolic process"/>
    <property type="evidence" value="ECO:0007669"/>
    <property type="project" value="UniProtKB-UniRule"/>
</dbReference>
<dbReference type="FunFam" id="3.30.1330.100:FF:000003">
    <property type="entry name" value="Coenzyme F420:L-glutamate ligase"/>
    <property type="match status" value="1"/>
</dbReference>
<dbReference type="FunFam" id="3.40.109.10:FF:000009">
    <property type="entry name" value="Coenzyme F420:L-glutamate ligase"/>
    <property type="match status" value="1"/>
</dbReference>
<dbReference type="Gene3D" id="3.30.1330.100">
    <property type="entry name" value="CofE-like"/>
    <property type="match status" value="2"/>
</dbReference>
<dbReference type="Gene3D" id="3.40.109.10">
    <property type="entry name" value="NADH Oxidase"/>
    <property type="match status" value="1"/>
</dbReference>
<dbReference type="HAMAP" id="MF_01259">
    <property type="entry name" value="F420_ligase_FbiB"/>
    <property type="match status" value="1"/>
</dbReference>
<dbReference type="InterPro" id="IPR008225">
    <property type="entry name" value="F420-0_g-glutamyl_ligase"/>
</dbReference>
<dbReference type="InterPro" id="IPR002847">
    <property type="entry name" value="F420-0_gamma-glut_ligase-dom"/>
</dbReference>
<dbReference type="InterPro" id="IPR019943">
    <property type="entry name" value="F420_FbiB_C"/>
</dbReference>
<dbReference type="InterPro" id="IPR023661">
    <property type="entry name" value="FbiB"/>
</dbReference>
<dbReference type="InterPro" id="IPR029479">
    <property type="entry name" value="Nitroreductase"/>
</dbReference>
<dbReference type="InterPro" id="IPR000415">
    <property type="entry name" value="Nitroreductase-like"/>
</dbReference>
<dbReference type="NCBIfam" id="TIGR01916">
    <property type="entry name" value="F420_cofE"/>
    <property type="match status" value="1"/>
</dbReference>
<dbReference type="NCBIfam" id="TIGR03553">
    <property type="entry name" value="F420_FbiB_CTERM"/>
    <property type="match status" value="1"/>
</dbReference>
<dbReference type="NCBIfam" id="NF009810">
    <property type="entry name" value="PRK13294.1"/>
    <property type="match status" value="1"/>
</dbReference>
<dbReference type="PANTHER" id="PTHR47917">
    <property type="match status" value="1"/>
</dbReference>
<dbReference type="PANTHER" id="PTHR47917:SF1">
    <property type="entry name" value="COENZYME F420:L-GLUTAMATE LIGASE"/>
    <property type="match status" value="1"/>
</dbReference>
<dbReference type="Pfam" id="PF01996">
    <property type="entry name" value="F420_ligase"/>
    <property type="match status" value="1"/>
</dbReference>
<dbReference type="Pfam" id="PF00881">
    <property type="entry name" value="Nitroreductase"/>
    <property type="match status" value="1"/>
</dbReference>
<dbReference type="SUPFAM" id="SSF144010">
    <property type="entry name" value="CofE-like"/>
    <property type="match status" value="1"/>
</dbReference>
<dbReference type="SUPFAM" id="SSF55469">
    <property type="entry name" value="FMN-dependent nitroreductase-like"/>
    <property type="match status" value="1"/>
</dbReference>
<proteinExistence type="inferred from homology"/>
<name>FBIB_STRCO</name>
<comment type="function">
    <text evidence="1">Bifunctional enzyme that catalyzes the GTP-dependent successive addition of two or more gamma-linked L-glutamates to the L-lactyl phosphodiester of 7,8-didemethyl-8-hydroxy-5-deazariboflavin (F420-0) to form polyglutamated F420 derivatives, and the FMNH2-dependent reduction of dehydro-F420-0 to form F420-0.</text>
</comment>
<comment type="catalytic activity">
    <reaction evidence="1">
        <text>oxidized coenzyme F420-0 + GTP + L-glutamate = oxidized coenzyme F420-1 + GDP + phosphate + H(+)</text>
        <dbReference type="Rhea" id="RHEA:30555"/>
        <dbReference type="ChEBI" id="CHEBI:15378"/>
        <dbReference type="ChEBI" id="CHEBI:29985"/>
        <dbReference type="ChEBI" id="CHEBI:37565"/>
        <dbReference type="ChEBI" id="CHEBI:43474"/>
        <dbReference type="ChEBI" id="CHEBI:58189"/>
        <dbReference type="ChEBI" id="CHEBI:59907"/>
        <dbReference type="ChEBI" id="CHEBI:59920"/>
        <dbReference type="EC" id="6.3.2.31"/>
    </reaction>
</comment>
<comment type="catalytic activity">
    <reaction evidence="1">
        <text>oxidized coenzyme F420-0 + FMN + H(+) = dehydro coenzyme F420-0 + FMNH2</text>
        <dbReference type="Rhea" id="RHEA:60360"/>
        <dbReference type="ChEBI" id="CHEBI:15378"/>
        <dbReference type="ChEBI" id="CHEBI:57618"/>
        <dbReference type="ChEBI" id="CHEBI:58210"/>
        <dbReference type="ChEBI" id="CHEBI:59907"/>
        <dbReference type="ChEBI" id="CHEBI:143705"/>
        <dbReference type="EC" id="1.3.8.17"/>
    </reaction>
</comment>
<comment type="catalytic activity">
    <reaction evidence="1">
        <text>oxidized coenzyme F420-1 + GTP + L-glutamate = oxidized coenzyme F420-2 + GDP + phosphate + H(+)</text>
        <dbReference type="Rhea" id="RHEA:30523"/>
        <dbReference type="ChEBI" id="CHEBI:15378"/>
        <dbReference type="ChEBI" id="CHEBI:29985"/>
        <dbReference type="ChEBI" id="CHEBI:37565"/>
        <dbReference type="ChEBI" id="CHEBI:43474"/>
        <dbReference type="ChEBI" id="CHEBI:57922"/>
        <dbReference type="ChEBI" id="CHEBI:58189"/>
        <dbReference type="ChEBI" id="CHEBI:59920"/>
        <dbReference type="EC" id="6.3.2.34"/>
    </reaction>
</comment>
<comment type="cofactor">
    <cofactor evidence="1">
        <name>Mg(2+)</name>
        <dbReference type="ChEBI" id="CHEBI:18420"/>
    </cofactor>
    <cofactor evidence="1">
        <name>Mn(2+)</name>
        <dbReference type="ChEBI" id="CHEBI:29035"/>
    </cofactor>
    <text evidence="1">Binds 2 divalent metal cations per subunit. The ions could be magnesium and/or manganese.</text>
</comment>
<comment type="cofactor">
    <cofactor evidence="1">
        <name>K(+)</name>
        <dbReference type="ChEBI" id="CHEBI:29103"/>
    </cofactor>
    <text evidence="1">Monovalent cation. The ion could be potassium.</text>
</comment>
<comment type="pathway">
    <text evidence="1">Cofactor biosynthesis; coenzyme F420 biosynthesis.</text>
</comment>
<comment type="similarity">
    <text evidence="1">In the N-terminal section; belongs to the CofE family.</text>
</comment>
<organism>
    <name type="scientific">Streptomyces coelicolor (strain ATCC BAA-471 / A3(2) / M145)</name>
    <dbReference type="NCBI Taxonomy" id="100226"/>
    <lineage>
        <taxon>Bacteria</taxon>
        <taxon>Bacillati</taxon>
        <taxon>Actinomycetota</taxon>
        <taxon>Actinomycetes</taxon>
        <taxon>Kitasatosporales</taxon>
        <taxon>Streptomycetaceae</taxon>
        <taxon>Streptomyces</taxon>
        <taxon>Streptomyces albidoflavus group</taxon>
    </lineage>
</organism>